<protein>
    <recommendedName>
        <fullName evidence="1">N-acetyl-gamma-glutamyl-phosphate reductase</fullName>
        <shortName evidence="1">AGPR</shortName>
        <ecNumber evidence="1">1.2.1.38</ecNumber>
    </recommendedName>
    <alternativeName>
        <fullName evidence="1">N-acetyl-glutamate semialdehyde dehydrogenase</fullName>
        <shortName evidence="1">NAGSA dehydrogenase</shortName>
    </alternativeName>
</protein>
<gene>
    <name evidence="1" type="primary">argC</name>
    <name type="ordered locus">BBR47_53030</name>
</gene>
<keyword id="KW-0028">Amino-acid biosynthesis</keyword>
<keyword id="KW-0055">Arginine biosynthesis</keyword>
<keyword id="KW-0963">Cytoplasm</keyword>
<keyword id="KW-0521">NADP</keyword>
<keyword id="KW-0560">Oxidoreductase</keyword>
<keyword id="KW-1185">Reference proteome</keyword>
<name>ARGC_BREBN</name>
<accession>C0Z6T1</accession>
<dbReference type="EC" id="1.2.1.38" evidence="1"/>
<dbReference type="EMBL" id="AP008955">
    <property type="protein sequence ID" value="BAH46280.1"/>
    <property type="molecule type" value="Genomic_DNA"/>
</dbReference>
<dbReference type="RefSeq" id="WP_015893529.1">
    <property type="nucleotide sequence ID" value="NC_012491.1"/>
</dbReference>
<dbReference type="SMR" id="C0Z6T1"/>
<dbReference type="STRING" id="358681.BBR47_53030"/>
<dbReference type="KEGG" id="bbe:BBR47_53030"/>
<dbReference type="eggNOG" id="COG0002">
    <property type="taxonomic scope" value="Bacteria"/>
</dbReference>
<dbReference type="HOGENOM" id="CLU_006384_0_1_9"/>
<dbReference type="UniPathway" id="UPA00068">
    <property type="reaction ID" value="UER00108"/>
</dbReference>
<dbReference type="Proteomes" id="UP000001877">
    <property type="component" value="Chromosome"/>
</dbReference>
<dbReference type="GO" id="GO:0005737">
    <property type="term" value="C:cytoplasm"/>
    <property type="evidence" value="ECO:0007669"/>
    <property type="project" value="UniProtKB-SubCell"/>
</dbReference>
<dbReference type="GO" id="GO:0003942">
    <property type="term" value="F:N-acetyl-gamma-glutamyl-phosphate reductase activity"/>
    <property type="evidence" value="ECO:0007669"/>
    <property type="project" value="UniProtKB-UniRule"/>
</dbReference>
<dbReference type="GO" id="GO:0051287">
    <property type="term" value="F:NAD binding"/>
    <property type="evidence" value="ECO:0007669"/>
    <property type="project" value="InterPro"/>
</dbReference>
<dbReference type="GO" id="GO:0070401">
    <property type="term" value="F:NADP+ binding"/>
    <property type="evidence" value="ECO:0007669"/>
    <property type="project" value="InterPro"/>
</dbReference>
<dbReference type="GO" id="GO:0006526">
    <property type="term" value="P:L-arginine biosynthetic process"/>
    <property type="evidence" value="ECO:0007669"/>
    <property type="project" value="UniProtKB-UniRule"/>
</dbReference>
<dbReference type="CDD" id="cd23934">
    <property type="entry name" value="AGPR_1_C"/>
    <property type="match status" value="1"/>
</dbReference>
<dbReference type="CDD" id="cd17895">
    <property type="entry name" value="AGPR_1_N"/>
    <property type="match status" value="1"/>
</dbReference>
<dbReference type="FunFam" id="3.30.360.10:FF:000014">
    <property type="entry name" value="N-acetyl-gamma-glutamyl-phosphate reductase"/>
    <property type="match status" value="1"/>
</dbReference>
<dbReference type="Gene3D" id="3.30.360.10">
    <property type="entry name" value="Dihydrodipicolinate Reductase, domain 2"/>
    <property type="match status" value="1"/>
</dbReference>
<dbReference type="Gene3D" id="3.40.50.720">
    <property type="entry name" value="NAD(P)-binding Rossmann-like Domain"/>
    <property type="match status" value="1"/>
</dbReference>
<dbReference type="HAMAP" id="MF_00150">
    <property type="entry name" value="ArgC_type1"/>
    <property type="match status" value="1"/>
</dbReference>
<dbReference type="InterPro" id="IPR023013">
    <property type="entry name" value="AGPR_AS"/>
</dbReference>
<dbReference type="InterPro" id="IPR000706">
    <property type="entry name" value="AGPR_type-1"/>
</dbReference>
<dbReference type="InterPro" id="IPR036291">
    <property type="entry name" value="NAD(P)-bd_dom_sf"/>
</dbReference>
<dbReference type="InterPro" id="IPR050085">
    <property type="entry name" value="NAGSA_dehydrogenase"/>
</dbReference>
<dbReference type="InterPro" id="IPR000534">
    <property type="entry name" value="Semialdehyde_DH_NAD-bd"/>
</dbReference>
<dbReference type="NCBIfam" id="TIGR01850">
    <property type="entry name" value="argC"/>
    <property type="match status" value="1"/>
</dbReference>
<dbReference type="PANTHER" id="PTHR32338:SF10">
    <property type="entry name" value="N-ACETYL-GAMMA-GLUTAMYL-PHOSPHATE REDUCTASE, CHLOROPLASTIC-RELATED"/>
    <property type="match status" value="1"/>
</dbReference>
<dbReference type="PANTHER" id="PTHR32338">
    <property type="entry name" value="N-ACETYL-GAMMA-GLUTAMYL-PHOSPHATE REDUCTASE, CHLOROPLASTIC-RELATED-RELATED"/>
    <property type="match status" value="1"/>
</dbReference>
<dbReference type="Pfam" id="PF01118">
    <property type="entry name" value="Semialdhyde_dh"/>
    <property type="match status" value="1"/>
</dbReference>
<dbReference type="Pfam" id="PF22698">
    <property type="entry name" value="Semialdhyde_dhC_1"/>
    <property type="match status" value="1"/>
</dbReference>
<dbReference type="SMART" id="SM00859">
    <property type="entry name" value="Semialdhyde_dh"/>
    <property type="match status" value="1"/>
</dbReference>
<dbReference type="SUPFAM" id="SSF55347">
    <property type="entry name" value="Glyceraldehyde-3-phosphate dehydrogenase-like, C-terminal domain"/>
    <property type="match status" value="1"/>
</dbReference>
<dbReference type="SUPFAM" id="SSF51735">
    <property type="entry name" value="NAD(P)-binding Rossmann-fold domains"/>
    <property type="match status" value="1"/>
</dbReference>
<dbReference type="PROSITE" id="PS01224">
    <property type="entry name" value="ARGC"/>
    <property type="match status" value="1"/>
</dbReference>
<proteinExistence type="inferred from homology"/>
<organism>
    <name type="scientific">Brevibacillus brevis (strain 47 / JCM 6285 / NBRC 100599)</name>
    <dbReference type="NCBI Taxonomy" id="358681"/>
    <lineage>
        <taxon>Bacteria</taxon>
        <taxon>Bacillati</taxon>
        <taxon>Bacillota</taxon>
        <taxon>Bacilli</taxon>
        <taxon>Bacillales</taxon>
        <taxon>Paenibacillaceae</taxon>
        <taxon>Brevibacillus</taxon>
    </lineage>
</organism>
<sequence length="346" mass="37201">MVRVGIVGATGYGGAELIRLLAGHPHVEIASLYSSSSEGDGLEKSFPHVAGLGLPTLSPIDADSMSGVNDLIFLATPAGVSSTLSPKLVEKGVKVIDLSGDFRLVNGAVYKTWYKHEPAPSQWVEAAVYGLTEWNQEQVAGASLIANPGCYPTATLLALLPLMKTGWVQSNSWIVDAKSGVSGAGRGVSLGVHYSETNESIHAYKVASHQHTPEIEQELQKQSGEETLVQFTPHLVPMTRGILVTAYGQLTADVTQVQIQELYEATYADKPFVRVRPAGSHPHTKEVYGSNYCDIAIHVDQRTKRVILLSVIDNMMKGAAGQAVQNMNVMFDLPEKTGLPLVPVYP</sequence>
<comment type="function">
    <text evidence="1">Catalyzes the NADPH-dependent reduction of N-acetyl-5-glutamyl phosphate to yield N-acetyl-L-glutamate 5-semialdehyde.</text>
</comment>
<comment type="catalytic activity">
    <reaction evidence="1">
        <text>N-acetyl-L-glutamate 5-semialdehyde + phosphate + NADP(+) = N-acetyl-L-glutamyl 5-phosphate + NADPH + H(+)</text>
        <dbReference type="Rhea" id="RHEA:21588"/>
        <dbReference type="ChEBI" id="CHEBI:15378"/>
        <dbReference type="ChEBI" id="CHEBI:29123"/>
        <dbReference type="ChEBI" id="CHEBI:43474"/>
        <dbReference type="ChEBI" id="CHEBI:57783"/>
        <dbReference type="ChEBI" id="CHEBI:57936"/>
        <dbReference type="ChEBI" id="CHEBI:58349"/>
        <dbReference type="EC" id="1.2.1.38"/>
    </reaction>
</comment>
<comment type="pathway">
    <text evidence="1">Amino-acid biosynthesis; L-arginine biosynthesis; N(2)-acetyl-L-ornithine from L-glutamate: step 3/4.</text>
</comment>
<comment type="subcellular location">
    <subcellularLocation>
        <location evidence="1">Cytoplasm</location>
    </subcellularLocation>
</comment>
<comment type="similarity">
    <text evidence="1">Belongs to the NAGSA dehydrogenase family. Type 1 subfamily.</text>
</comment>
<reference key="1">
    <citation type="submission" date="2005-03" db="EMBL/GenBank/DDBJ databases">
        <title>Brevibacillus brevis strain 47, complete genome.</title>
        <authorList>
            <person name="Hosoyama A."/>
            <person name="Yamada R."/>
            <person name="Hongo Y."/>
            <person name="Terui Y."/>
            <person name="Ankai A."/>
            <person name="Masuyama W."/>
            <person name="Sekiguchi M."/>
            <person name="Takeda T."/>
            <person name="Asano K."/>
            <person name="Ohji S."/>
            <person name="Ichikawa N."/>
            <person name="Narita S."/>
            <person name="Aoki N."/>
            <person name="Miura H."/>
            <person name="Matsushita S."/>
            <person name="Sekigawa T."/>
            <person name="Yamagata H."/>
            <person name="Yoshikawa H."/>
            <person name="Udaka S."/>
            <person name="Tanikawa S."/>
            <person name="Fujita N."/>
        </authorList>
    </citation>
    <scope>NUCLEOTIDE SEQUENCE [LARGE SCALE GENOMIC DNA]</scope>
    <source>
        <strain>47 / JCM 6285 / NBRC 100599</strain>
    </source>
</reference>
<feature type="chain" id="PRO_1000123235" description="N-acetyl-gamma-glutamyl-phosphate reductase">
    <location>
        <begin position="1"/>
        <end position="346"/>
    </location>
</feature>
<feature type="active site" evidence="1">
    <location>
        <position position="150"/>
    </location>
</feature>
<evidence type="ECO:0000255" key="1">
    <source>
        <dbReference type="HAMAP-Rule" id="MF_00150"/>
    </source>
</evidence>